<organism>
    <name type="scientific">Dictyostelium discoideum</name>
    <name type="common">Social amoeba</name>
    <dbReference type="NCBI Taxonomy" id="44689"/>
    <lineage>
        <taxon>Eukaryota</taxon>
        <taxon>Amoebozoa</taxon>
        <taxon>Evosea</taxon>
        <taxon>Eumycetozoa</taxon>
        <taxon>Dictyostelia</taxon>
        <taxon>Dictyosteliales</taxon>
        <taxon>Dictyosteliaceae</taxon>
        <taxon>Dictyostelium</taxon>
    </lineage>
</organism>
<reference key="1">
    <citation type="journal article" date="2005" name="Nature">
        <title>The genome of the social amoeba Dictyostelium discoideum.</title>
        <authorList>
            <person name="Eichinger L."/>
            <person name="Pachebat J.A."/>
            <person name="Gloeckner G."/>
            <person name="Rajandream M.A."/>
            <person name="Sucgang R."/>
            <person name="Berriman M."/>
            <person name="Song J."/>
            <person name="Olsen R."/>
            <person name="Szafranski K."/>
            <person name="Xu Q."/>
            <person name="Tunggal B."/>
            <person name="Kummerfeld S."/>
            <person name="Madera M."/>
            <person name="Konfortov B.A."/>
            <person name="Rivero F."/>
            <person name="Bankier A.T."/>
            <person name="Lehmann R."/>
            <person name="Hamlin N."/>
            <person name="Davies R."/>
            <person name="Gaudet P."/>
            <person name="Fey P."/>
            <person name="Pilcher K."/>
            <person name="Chen G."/>
            <person name="Saunders D."/>
            <person name="Sodergren E.J."/>
            <person name="Davis P."/>
            <person name="Kerhornou A."/>
            <person name="Nie X."/>
            <person name="Hall N."/>
            <person name="Anjard C."/>
            <person name="Hemphill L."/>
            <person name="Bason N."/>
            <person name="Farbrother P."/>
            <person name="Desany B."/>
            <person name="Just E."/>
            <person name="Morio T."/>
            <person name="Rost R."/>
            <person name="Churcher C.M."/>
            <person name="Cooper J."/>
            <person name="Haydock S."/>
            <person name="van Driessche N."/>
            <person name="Cronin A."/>
            <person name="Goodhead I."/>
            <person name="Muzny D.M."/>
            <person name="Mourier T."/>
            <person name="Pain A."/>
            <person name="Lu M."/>
            <person name="Harper D."/>
            <person name="Lindsay R."/>
            <person name="Hauser H."/>
            <person name="James K.D."/>
            <person name="Quiles M."/>
            <person name="Madan Babu M."/>
            <person name="Saito T."/>
            <person name="Buchrieser C."/>
            <person name="Wardroper A."/>
            <person name="Felder M."/>
            <person name="Thangavelu M."/>
            <person name="Johnson D."/>
            <person name="Knights A."/>
            <person name="Loulseged H."/>
            <person name="Mungall K.L."/>
            <person name="Oliver K."/>
            <person name="Price C."/>
            <person name="Quail M.A."/>
            <person name="Urushihara H."/>
            <person name="Hernandez J."/>
            <person name="Rabbinowitsch E."/>
            <person name="Steffen D."/>
            <person name="Sanders M."/>
            <person name="Ma J."/>
            <person name="Kohara Y."/>
            <person name="Sharp S."/>
            <person name="Simmonds M.N."/>
            <person name="Spiegler S."/>
            <person name="Tivey A."/>
            <person name="Sugano S."/>
            <person name="White B."/>
            <person name="Walker D."/>
            <person name="Woodward J.R."/>
            <person name="Winckler T."/>
            <person name="Tanaka Y."/>
            <person name="Shaulsky G."/>
            <person name="Schleicher M."/>
            <person name="Weinstock G.M."/>
            <person name="Rosenthal A."/>
            <person name="Cox E.C."/>
            <person name="Chisholm R.L."/>
            <person name="Gibbs R.A."/>
            <person name="Loomis W.F."/>
            <person name="Platzer M."/>
            <person name="Kay R.R."/>
            <person name="Williams J.G."/>
            <person name="Dear P.H."/>
            <person name="Noegel A.A."/>
            <person name="Barrell B.G."/>
            <person name="Kuspa A."/>
        </authorList>
    </citation>
    <scope>NUCLEOTIDE SEQUENCE [LARGE SCALE GENOMIC DNA]</scope>
    <source>
        <strain>AX4</strain>
    </source>
</reference>
<keyword id="KW-1185">Reference proteome</keyword>
<keyword id="KW-0346">Stress response</keyword>
<dbReference type="EMBL" id="AAFI02000035">
    <property type="protein sequence ID" value="EAL67478.1"/>
    <property type="molecule type" value="Genomic_DNA"/>
</dbReference>
<dbReference type="RefSeq" id="XP_641407.1">
    <property type="nucleotide sequence ID" value="XM_636315.1"/>
</dbReference>
<dbReference type="SMR" id="Q54W43"/>
<dbReference type="STRING" id="44689.Q54W43"/>
<dbReference type="PaxDb" id="44689-DDB0232135"/>
<dbReference type="EnsemblProtists" id="EAL67478">
    <property type="protein sequence ID" value="EAL67478"/>
    <property type="gene ID" value="DDB_G0280013"/>
</dbReference>
<dbReference type="GeneID" id="8622290"/>
<dbReference type="KEGG" id="ddi:DDB_G0280013"/>
<dbReference type="dictyBase" id="DDB_G0280013">
    <property type="gene designation" value="hspM"/>
</dbReference>
<dbReference type="VEuPathDB" id="AmoebaDB:DDB_G0280013"/>
<dbReference type="HOGENOM" id="CLU_1663947_0_0_1"/>
<dbReference type="InParanoid" id="Q54W43"/>
<dbReference type="OMA" id="FAFPGRI"/>
<dbReference type="PhylomeDB" id="Q54W43"/>
<dbReference type="PRO" id="PR:Q54W43"/>
<dbReference type="Proteomes" id="UP000002195">
    <property type="component" value="Chromosome 3"/>
</dbReference>
<dbReference type="CDD" id="cd06464">
    <property type="entry name" value="ACD_sHsps-like"/>
    <property type="match status" value="1"/>
</dbReference>
<dbReference type="Gene3D" id="2.60.40.790">
    <property type="match status" value="1"/>
</dbReference>
<dbReference type="InterPro" id="IPR002068">
    <property type="entry name" value="A-crystallin/Hsp20_dom"/>
</dbReference>
<dbReference type="InterPro" id="IPR008978">
    <property type="entry name" value="HSP20-like_chaperone"/>
</dbReference>
<dbReference type="InterPro" id="IPR051779">
    <property type="entry name" value="HspG1-11-like"/>
</dbReference>
<dbReference type="PANTHER" id="PTHR46827">
    <property type="entry name" value="HEAT SHOCK PROTEIN DDB_G0288861-RELATED"/>
    <property type="match status" value="1"/>
</dbReference>
<dbReference type="PANTHER" id="PTHR46827:SF1">
    <property type="entry name" value="HEAT SHOCK PROTEIN DDB_G0288861-RELATED"/>
    <property type="match status" value="1"/>
</dbReference>
<dbReference type="Pfam" id="PF00011">
    <property type="entry name" value="HSP20"/>
    <property type="match status" value="1"/>
</dbReference>
<dbReference type="SUPFAM" id="SSF49764">
    <property type="entry name" value="HSP20-like chaperones"/>
    <property type="match status" value="1"/>
</dbReference>
<dbReference type="PROSITE" id="PS01031">
    <property type="entry name" value="SHSP"/>
    <property type="match status" value="1"/>
</dbReference>
<evidence type="ECO:0000255" key="1">
    <source>
        <dbReference type="PROSITE-ProRule" id="PRU00285"/>
    </source>
</evidence>
<evidence type="ECO:0000256" key="2">
    <source>
        <dbReference type="SAM" id="MobiDB-lite"/>
    </source>
</evidence>
<protein>
    <recommendedName>
        <fullName>Small heat shock protein hspM</fullName>
    </recommendedName>
</protein>
<sequence>MFVLNFELAGVNKNDIKIEIKDSLLCIQGEKYKSMNNNNKNNLQINNDDKPMIEEEDDDSSSSSNNNNNNNNNNNNNNNNNNNNNNNNNSNNNNNKSSKTNDKKFISERSFGHFEKYLDLSPVFYQLDLSTINAQFEDGLLTITVRKTNLSNNIKIQIN</sequence>
<comment type="similarity">
    <text evidence="1">Belongs to the small heat shock protein (HSP20) family.</text>
</comment>
<name>HSPM_DICDI</name>
<accession>Q54W43</accession>
<feature type="chain" id="PRO_0000363909" description="Small heat shock protein hspM">
    <location>
        <begin position="1"/>
        <end position="159"/>
    </location>
</feature>
<feature type="domain" description="sHSP" evidence="1">
    <location>
        <begin position="1"/>
        <end position="159"/>
    </location>
</feature>
<feature type="region of interest" description="Disordered" evidence="2">
    <location>
        <begin position="35"/>
        <end position="101"/>
    </location>
</feature>
<feature type="compositionally biased region" description="Low complexity" evidence="2">
    <location>
        <begin position="36"/>
        <end position="46"/>
    </location>
</feature>
<feature type="compositionally biased region" description="Low complexity" evidence="2">
    <location>
        <begin position="61"/>
        <end position="95"/>
    </location>
</feature>
<proteinExistence type="inferred from homology"/>
<gene>
    <name type="primary">hspM</name>
    <name type="ORF">DDB_G0280013</name>
</gene>